<comment type="subunit">
    <text evidence="1">Homotetramer.</text>
</comment>
<evidence type="ECO:0000255" key="1">
    <source>
        <dbReference type="HAMAP-Rule" id="MF_00984"/>
    </source>
</evidence>
<sequence>MRGKRMNHITVSGLVATEPRSFLTAEGVHITSFRLAAQDRHFSRNANSWVSGDTNWFTVTGFRALGSNAAESISKGDRVIVYGRLRLRTWGDNKMAVEIEAESFGHDLRWGTSVFSKRFYQLPEASDNLRTKYDVDEAETPEIHAKAA</sequence>
<proteinExistence type="inferred from homology"/>
<organism>
    <name type="scientific">Tropheryma whipplei (strain TW08/27)</name>
    <name type="common">Whipple's bacillus</name>
    <dbReference type="NCBI Taxonomy" id="218496"/>
    <lineage>
        <taxon>Bacteria</taxon>
        <taxon>Bacillati</taxon>
        <taxon>Actinomycetota</taxon>
        <taxon>Actinomycetes</taxon>
        <taxon>Micrococcales</taxon>
        <taxon>Tropherymataceae</taxon>
        <taxon>Tropheryma</taxon>
    </lineage>
</organism>
<keyword id="KW-0238">DNA-binding</keyword>
<name>SSB2_TROW8</name>
<accession>P66857</accession>
<accession>Q83MW0</accession>
<accession>Q83NL7</accession>
<feature type="chain" id="PRO_0000096134" description="Single-stranded DNA-binding protein 2">
    <location>
        <begin position="1"/>
        <end position="148"/>
    </location>
</feature>
<feature type="domain" description="SSB" evidence="1">
    <location>
        <begin position="6"/>
        <end position="108"/>
    </location>
</feature>
<reference key="1">
    <citation type="journal article" date="2003" name="Lancet">
        <title>Sequencing and analysis of the genome of the Whipple's disease bacterium Tropheryma whipplei.</title>
        <authorList>
            <person name="Bentley S.D."/>
            <person name="Maiwald M."/>
            <person name="Murphy L.D."/>
            <person name="Pallen M.J."/>
            <person name="Yeats C.A."/>
            <person name="Dover L.G."/>
            <person name="Norbertczak H.T."/>
            <person name="Besra G.S."/>
            <person name="Quail M.A."/>
            <person name="Harris D.E."/>
            <person name="von Herbay A."/>
            <person name="Goble A."/>
            <person name="Rutter S."/>
            <person name="Squares R."/>
            <person name="Squares S."/>
            <person name="Barrell B.G."/>
            <person name="Parkhill J."/>
            <person name="Relman D.A."/>
        </authorList>
    </citation>
    <scope>NUCLEOTIDE SEQUENCE [LARGE SCALE GENOMIC DNA]</scope>
    <source>
        <strain>TW08/27</strain>
    </source>
</reference>
<dbReference type="EMBL" id="BX251411">
    <property type="protein sequence ID" value="CAD67038.1"/>
    <property type="molecule type" value="Genomic_DNA"/>
</dbReference>
<dbReference type="RefSeq" id="WP_011096318.1">
    <property type="nucleotide sequence ID" value="NC_004551.1"/>
</dbReference>
<dbReference type="SMR" id="P66857"/>
<dbReference type="GeneID" id="67388141"/>
<dbReference type="KEGG" id="tws:TW367"/>
<dbReference type="HOGENOM" id="CLU_078758_1_0_11"/>
<dbReference type="GO" id="GO:0003697">
    <property type="term" value="F:single-stranded DNA binding"/>
    <property type="evidence" value="ECO:0007669"/>
    <property type="project" value="UniProtKB-UniRule"/>
</dbReference>
<dbReference type="GO" id="GO:0006260">
    <property type="term" value="P:DNA replication"/>
    <property type="evidence" value="ECO:0007669"/>
    <property type="project" value="InterPro"/>
</dbReference>
<dbReference type="CDD" id="cd04496">
    <property type="entry name" value="SSB_OBF"/>
    <property type="match status" value="1"/>
</dbReference>
<dbReference type="Gene3D" id="2.40.50.140">
    <property type="entry name" value="Nucleic acid-binding proteins"/>
    <property type="match status" value="1"/>
</dbReference>
<dbReference type="HAMAP" id="MF_00984">
    <property type="entry name" value="SSB"/>
    <property type="match status" value="1"/>
</dbReference>
<dbReference type="InterPro" id="IPR012340">
    <property type="entry name" value="NA-bd_OB-fold"/>
</dbReference>
<dbReference type="InterPro" id="IPR000424">
    <property type="entry name" value="Primosome_PriB/ssb"/>
</dbReference>
<dbReference type="InterPro" id="IPR011344">
    <property type="entry name" value="ssDNA-bd"/>
</dbReference>
<dbReference type="Pfam" id="PF00436">
    <property type="entry name" value="SSB"/>
    <property type="match status" value="1"/>
</dbReference>
<dbReference type="PIRSF" id="PIRSF002070">
    <property type="entry name" value="SSB"/>
    <property type="match status" value="1"/>
</dbReference>
<dbReference type="SUPFAM" id="SSF50249">
    <property type="entry name" value="Nucleic acid-binding proteins"/>
    <property type="match status" value="1"/>
</dbReference>
<dbReference type="PROSITE" id="PS50935">
    <property type="entry name" value="SSB"/>
    <property type="match status" value="1"/>
</dbReference>
<gene>
    <name type="primary">ssb2</name>
    <name type="ordered locus">TW367</name>
</gene>
<protein>
    <recommendedName>
        <fullName evidence="1">Single-stranded DNA-binding protein 2</fullName>
        <shortName evidence="1">SSB 2</shortName>
    </recommendedName>
</protein>